<gene>
    <name type="ORF">1a</name>
</gene>
<name>R1A_BCRP3</name>
<protein>
    <recommendedName>
        <fullName>Replicase polyprotein 1a</fullName>
        <shortName>pp1a</shortName>
    </recommendedName>
    <alternativeName>
        <fullName>ORF1a polyprotein</fullName>
    </alternativeName>
    <component>
        <recommendedName>
            <fullName>Non-structural protein 1</fullName>
            <shortName>nsp1</shortName>
        </recommendedName>
        <alternativeName>
            <fullName>Leader protein</fullName>
        </alternativeName>
    </component>
    <component>
        <recommendedName>
            <fullName>Non-structural protein 2</fullName>
            <shortName>nsp2</shortName>
        </recommendedName>
        <alternativeName>
            <fullName>p65 homolog</fullName>
        </alternativeName>
    </component>
    <component>
        <recommendedName>
            <fullName>Papain-like protease nsp3</fullName>
            <shortName>PL-PRO</shortName>
            <ecNumber>3.4.19.12</ecNumber>
            <ecNumber>3.4.22.-</ecNumber>
        </recommendedName>
        <alternativeName>
            <fullName>Non-structural protein 3</fullName>
            <shortName>nsp3</shortName>
        </alternativeName>
        <alternativeName>
            <fullName>PL2-PRO</fullName>
        </alternativeName>
    </component>
    <component>
        <recommendedName>
            <fullName>Non-structural protein 4</fullName>
            <shortName>nsp4</shortName>
        </recommendedName>
    </component>
    <component>
        <recommendedName>
            <fullName>3C-like proteinase nsp5</fullName>
            <shortName>3CL-PRO</shortName>
            <shortName>3CLp</shortName>
            <ecNumber>3.4.22.69</ecNumber>
        </recommendedName>
        <alternativeName>
            <fullName>nsp5</fullName>
        </alternativeName>
    </component>
    <component>
        <recommendedName>
            <fullName>Non-structural protein 6</fullName>
            <shortName>nsp6</shortName>
        </recommendedName>
    </component>
    <component>
        <recommendedName>
            <fullName>Non-structural protein 7</fullName>
            <shortName>nsp7</shortName>
        </recommendedName>
    </component>
    <component>
        <recommendedName>
            <fullName>Non-structural protein 8</fullName>
            <shortName>nsp8</shortName>
        </recommendedName>
    </component>
    <component>
        <recommendedName>
            <fullName>RNA-capping enzyme subunit nsp9</fullName>
        </recommendedName>
        <alternativeName>
            <fullName>Non-structural protein 9</fullName>
            <shortName>nsp9</shortName>
            <ecNumber>2.7.7.50</ecNumber>
        </alternativeName>
    </component>
    <component>
        <recommendedName>
            <fullName>Non-structural protein 10</fullName>
            <shortName>nsp10</shortName>
        </recommendedName>
        <alternativeName>
            <fullName>Growth factor-like peptide</fullName>
            <shortName>GFL</shortName>
        </alternativeName>
    </component>
    <component>
        <recommendedName>
            <fullName>Non-structural protein 11</fullName>
            <shortName>nsp11</shortName>
        </recommendedName>
    </component>
</protein>
<comment type="function">
    <text evidence="1">The papain-like proteinase (PL-PRO) is responsible for the cleavages located at the N-terminus of replicase polyprotein. In addition, PL-PRO possesses a deubiquitinating/deISGylating activity and processes both 'Lys-48'- and 'Lys-63'-linked polyubiquitin chains from cellular substrates. Antagonizes innate immune induction of type I interferon by blocking the phosphorylation, dimerization and subsequent nuclear translocation of host IRF-3 (By similarity).</text>
</comment>
<comment type="function">
    <molecule>3C-like proteinase nsp5</molecule>
    <text evidence="7">Responsible for the majority of cleavages as it cleaves the C-terminus of replicase polyprotein at 11 sites. Recognizes substrates containing the core sequence [ILMVF]-Q-|-[SGACN]. Inhibited by the substrate-analog Cbz-Val-Asn-Ser-Thr-Leu-Gln-CMK. Also contains an ADP-ribose-1''-phosphate (ADRP)-binding function (By similarity).</text>
</comment>
<comment type="function">
    <text evidence="1">Nsp7-nsp8 hexadecamer may possibly confer processivity to the polymerase, maybe by binding to dsRNA or by producing primers utilized by the latter.</text>
</comment>
<comment type="function">
    <molecule>RNA-capping enzyme subunit nsp9</molecule>
    <text evidence="2">Catalytic subunit of viral RNA capping enzyme which catalyzes the RNA guanylyltransferase reaction for genomic and sub-genomic RNAs. The kinase-like NiRAN domain of NSP12 transfers RNA to the amino terminus of NSP9, forming a covalent RNA-protein intermediate. Subsequently, the NiRAN domain transfers RNA to GDP, forming the core cap structure GpppA-RNA. The NSP14 and NSP16 methyltransferases then add methyl groups to form functional cap structures.</text>
</comment>
<comment type="function">
    <molecule>Non-structural protein 1</molecule>
    <text evidence="1">Binds to the 40S ribosomal subunit and inhibits host translation. The nsp1-40S ribosome complex further induces an endonucleolytic cleavage near the 5'UTR of host mRNAs, targeting them for degradation. By suppressing host gene expression, nsp1 facilitates efficient viral gene expression in infected cells and evasion from host immune response (By similarity).</text>
</comment>
<comment type="catalytic activity">
    <molecule>Papain-like protease nsp3</molecule>
    <reaction evidence="2">
        <text>Thiol-dependent hydrolysis of ester, thioester, amide, peptide and isopeptide bonds formed by the C-terminal Gly of ubiquitin (a 76-residue protein attached to proteins as an intracellular targeting signal).</text>
        <dbReference type="EC" id="3.4.19.12"/>
    </reaction>
</comment>
<comment type="catalytic activity">
    <molecule>3C-like proteinase nsp5</molecule>
    <reaction evidence="2">
        <text>TSAVLQ-|-SGFRK-NH2 and SGVTFQ-|-GKFKK the two peptides corresponding to the two self-cleavage sites of the SARS 3C-like proteinase are the two most reactive peptide substrates. The enzyme exhibits a strong preference for substrates containing Gln at P1 position and Leu at P2 position.</text>
        <dbReference type="EC" id="3.4.22.69"/>
    </reaction>
</comment>
<comment type="catalytic activity">
    <molecule>RNA-capping enzyme subunit nsp9</molecule>
    <reaction evidence="2">
        <text>a 5'-end diphospho-ribonucleoside in mRNA + GTP + H(+) = a 5'-end (5'-triphosphoguanosine)-ribonucleoside in mRNA + diphosphate</text>
        <dbReference type="Rhea" id="RHEA:67012"/>
        <dbReference type="Rhea" id="RHEA-COMP:17165"/>
        <dbReference type="Rhea" id="RHEA-COMP:17166"/>
        <dbReference type="ChEBI" id="CHEBI:15378"/>
        <dbReference type="ChEBI" id="CHEBI:33019"/>
        <dbReference type="ChEBI" id="CHEBI:37565"/>
        <dbReference type="ChEBI" id="CHEBI:167616"/>
        <dbReference type="ChEBI" id="CHEBI:167617"/>
        <dbReference type="EC" id="2.7.7.50"/>
    </reaction>
    <physiologicalReaction direction="right-to-left" evidence="2">
        <dbReference type="Rhea" id="RHEA:67014"/>
    </physiologicalReaction>
</comment>
<comment type="subunit">
    <text evidence="1">3CL-PRO exists as monomer and homodimer. Eight copies of nsp7 and eight copies of nsp8 assemble to form a heterohexadecamer. Nsp9 is a dimer. Nsp10 forms a dodecamer (By similarity).</text>
</comment>
<comment type="subcellular location">
    <molecule>Papain-like protease nsp3</molecule>
    <subcellularLocation>
        <location evidence="23">Host membrane</location>
        <topology evidence="23">Multi-pass membrane protein</topology>
    </subcellularLocation>
</comment>
<comment type="subcellular location">
    <molecule>Non-structural protein 4</molecule>
    <subcellularLocation>
        <location evidence="23">Host membrane</location>
        <topology evidence="23">Multi-pass membrane protein</topology>
    </subcellularLocation>
</comment>
<comment type="subcellular location">
    <molecule>Non-structural protein 6</molecule>
    <subcellularLocation>
        <location evidence="23">Host membrane</location>
        <topology evidence="23">Multi-pass membrane protein</topology>
    </subcellularLocation>
</comment>
<comment type="subcellular location">
    <molecule>Non-structural protein 7</molecule>
    <subcellularLocation>
        <location evidence="1">Host cytoplasm</location>
        <location evidence="1">Host perinuclear region</location>
    </subcellularLocation>
    <text evidence="1">nsp7, nsp8, nsp9 and nsp10 are localized in cytoplasmic foci, largely perinuclear. Late in infection, they merge into confluent complexes (By similarity).</text>
</comment>
<comment type="subcellular location">
    <molecule>Non-structural protein 8</molecule>
    <subcellularLocation>
        <location evidence="1">Host cytoplasm</location>
        <location evidence="1">Host perinuclear region</location>
    </subcellularLocation>
    <text evidence="1">nsp7, nsp8, nsp9 and nsp10 are localized in cytoplasmic foci, largely perinuclear. Late in infection, they merge into confluent complexes (By similarity).</text>
</comment>
<comment type="subcellular location">
    <molecule>RNA-capping enzyme subunit nsp9</molecule>
    <subcellularLocation>
        <location evidence="1">Host cytoplasm</location>
        <location evidence="1">Host perinuclear region</location>
    </subcellularLocation>
    <text evidence="1">nsp7, nsp8, nsp9 and nsp10 are localized in cytoplasmic foci, largely perinuclear. Late in infection, they merge into confluent complexes (By similarity).</text>
</comment>
<comment type="subcellular location">
    <molecule>Non-structural protein 10</molecule>
    <subcellularLocation>
        <location evidence="1">Host cytoplasm</location>
        <location evidence="1">Host perinuclear region</location>
    </subcellularLocation>
    <text evidence="1">nsp7, nsp8, nsp9 and nsp10 are localized in cytoplasmic foci, largely perinuclear. Late in infection, they merge into confluent complexes (By similarity).</text>
</comment>
<comment type="alternative products">
    <event type="ribosomal frameshifting"/>
    <isoform>
        <id>P0C6T7-1</id>
        <name>Replicase polyprotein 1a</name>
        <name>pp1a</name>
        <name>ORF1a polyprotein</name>
        <sequence type="displayed"/>
    </isoform>
    <isoform>
        <id>P0C6W6-1</id>
        <name>Replicase polyprotein 1ab</name>
        <name>pp1ab</name>
        <sequence type="external"/>
    </isoform>
</comment>
<comment type="domain">
    <text evidence="1">The hydrophobic domains (HD) could mediate the membrane association of the replication complex and thereby alter the architecture of the host cell membrane.</text>
</comment>
<comment type="PTM">
    <text evidence="1">Specific enzymatic cleavages in vivo by its own proteases yield mature proteins. 3CL-PRO and PL-PRO proteinases are autocatalytically processed (By similarity).</text>
</comment>
<comment type="miscellaneous">
    <text>Bat coronavirus rp3 is highly similar to SARS-CoV (SARS-like).</text>
</comment>
<comment type="miscellaneous">
    <molecule>Isoform Replicase polyprotein 1a</molecule>
    <text>Produced by conventional translation.</text>
</comment>
<comment type="similarity">
    <text evidence="23">Belongs to the coronaviruses polyprotein 1ab family.</text>
</comment>
<organismHost>
    <name type="scientific">Rhinolophus ferrumequinum</name>
    <name type="common">Greater horseshoe bat</name>
    <dbReference type="NCBI Taxonomy" id="59479"/>
</organismHost>
<organismHost>
    <name type="scientific">Rhinolophus macrotis</name>
    <name type="common">Big-eared horseshoe bat</name>
    <dbReference type="NCBI Taxonomy" id="196889"/>
</organismHost>
<organismHost>
    <name type="scientific">Rhinolophus pearsonii</name>
    <dbReference type="NCBI Taxonomy" id="188571"/>
</organismHost>
<organismHost>
    <name type="scientific">Rhinolophus sinicus</name>
    <name type="common">Chinese rufous horseshoe bat</name>
    <dbReference type="NCBI Taxonomy" id="89399"/>
</organismHost>
<feature type="chain" id="PRO_0000338122" description="Replicase polyprotein 1a">
    <location>
        <begin position="1"/>
        <end position="4380"/>
    </location>
</feature>
<feature type="chain" id="PRO_0000338123" description="Non-structural protein 1" evidence="1">
    <location>
        <begin position="1"/>
        <end position="179"/>
    </location>
</feature>
<feature type="chain" id="PRO_0000338124" description="Non-structural protein 2" evidence="1">
    <location>
        <begin position="180"/>
        <end position="818"/>
    </location>
</feature>
<feature type="chain" id="PRO_0000338125" description="Papain-like protease nsp3" evidence="1">
    <location>
        <begin position="819"/>
        <end position="2738"/>
    </location>
</feature>
<feature type="chain" id="PRO_0000338126" description="Non-structural protein 4" evidence="1">
    <location>
        <begin position="2739"/>
        <end position="3238"/>
    </location>
</feature>
<feature type="chain" id="PRO_0000338127" description="3C-like proteinase nsp5" evidence="1">
    <location>
        <begin position="3239"/>
        <end position="3544"/>
    </location>
</feature>
<feature type="chain" id="PRO_0000338128" description="Non-structural protein 6" evidence="1">
    <location>
        <begin position="3545"/>
        <end position="3834"/>
    </location>
</feature>
<feature type="chain" id="PRO_0000338129" description="Non-structural protein 7" evidence="1">
    <location>
        <begin position="3835"/>
        <end position="3917"/>
    </location>
</feature>
<feature type="chain" id="PRO_0000338130" description="Non-structural protein 8" evidence="1">
    <location>
        <begin position="3918"/>
        <end position="4115"/>
    </location>
</feature>
<feature type="chain" id="PRO_0000338131" description="RNA-capping enzyme subunit nsp9" evidence="1">
    <location>
        <begin position="4116"/>
        <end position="4228"/>
    </location>
</feature>
<feature type="chain" id="PRO_0000338132" description="Non-structural protein 10" evidence="1">
    <location>
        <begin position="4229"/>
        <end position="4367"/>
    </location>
</feature>
<feature type="chain" id="PRO_0000338133" description="Non-structural protein 11" evidence="3">
    <location>
        <begin position="4368"/>
        <end position="4380"/>
    </location>
</feature>
<feature type="transmembrane region" description="Helical" evidence="3">
    <location>
        <begin position="2201"/>
        <end position="2221"/>
    </location>
</feature>
<feature type="transmembrane region" description="Helical" evidence="3">
    <location>
        <begin position="2312"/>
        <end position="2334"/>
    </location>
</feature>
<feature type="transmembrane region" description="Helical" evidence="3">
    <location>
        <begin position="2349"/>
        <end position="2369"/>
    </location>
</feature>
<feature type="transmembrane region" description="Helical" evidence="3">
    <location>
        <begin position="2753"/>
        <end position="2773"/>
    </location>
</feature>
<feature type="transmembrane region" description="Helical" evidence="3">
    <location>
        <begin position="3020"/>
        <end position="3040"/>
    </location>
</feature>
<feature type="transmembrane region" description="Helical" evidence="3">
    <location>
        <begin position="3059"/>
        <end position="3079"/>
    </location>
</feature>
<feature type="transmembrane region" description="Helical" evidence="3">
    <location>
        <begin position="3081"/>
        <end position="3101"/>
    </location>
</feature>
<feature type="transmembrane region" description="Helical" evidence="3">
    <location>
        <begin position="3103"/>
        <end position="3123"/>
    </location>
</feature>
<feature type="transmembrane region" description="Helical" evidence="3">
    <location>
        <begin position="3140"/>
        <end position="3160"/>
    </location>
</feature>
<feature type="transmembrane region" description="Helical" evidence="3">
    <location>
        <begin position="3562"/>
        <end position="3582"/>
    </location>
</feature>
<feature type="transmembrane region" description="Helical" evidence="3">
    <location>
        <begin position="3584"/>
        <end position="3604"/>
    </location>
</feature>
<feature type="transmembrane region" description="Helical" evidence="3">
    <location>
        <begin position="3610"/>
        <end position="3630"/>
    </location>
</feature>
<feature type="transmembrane region" description="Helical" evidence="3">
    <location>
        <begin position="3657"/>
        <end position="3676"/>
    </location>
</feature>
<feature type="transmembrane region" description="Helical" evidence="3">
    <location>
        <begin position="3683"/>
        <end position="3702"/>
    </location>
</feature>
<feature type="transmembrane region" description="Helical" evidence="3">
    <location>
        <begin position="3726"/>
        <end position="3746"/>
    </location>
</feature>
<feature type="transmembrane region" description="Helical" evidence="3">
    <location>
        <begin position="3754"/>
        <end position="3774"/>
    </location>
</feature>
<feature type="domain" description="CoV Nsp1 globular" evidence="15">
    <location>
        <begin position="12"/>
        <end position="127"/>
    </location>
</feature>
<feature type="domain" description="BetaCoV Nsp1 C-terminal" evidence="16">
    <location>
        <begin position="148"/>
        <end position="179"/>
    </location>
</feature>
<feature type="domain" description="CoV Nsp2 N-terminal" evidence="17">
    <location>
        <begin position="183"/>
        <end position="456"/>
    </location>
</feature>
<feature type="domain" description="CoV Nsp2 middle" evidence="18">
    <location>
        <begin position="458"/>
        <end position="688"/>
    </location>
</feature>
<feature type="domain" description="CoV Nsp2 C-terminal" evidence="19">
    <location>
        <begin position="690"/>
        <end position="818"/>
    </location>
</feature>
<feature type="domain" description="Ubiquitin-like 1" evidence="4">
    <location>
        <begin position="822"/>
        <end position="930"/>
    </location>
</feature>
<feature type="domain" description="Macro 1" evidence="6">
    <location>
        <begin position="1001"/>
        <end position="1167"/>
    </location>
</feature>
<feature type="domain" description="Macro 2" evidence="6">
    <location>
        <begin position="1205"/>
        <end position="1333"/>
    </location>
</feature>
<feature type="domain" description="Macro 3" evidence="6">
    <location>
        <begin position="1341"/>
        <end position="1468"/>
    </location>
</feature>
<feature type="domain" description="DPUP" evidence="8">
    <location>
        <begin position="1470"/>
        <end position="1536"/>
    </location>
</feature>
<feature type="domain" description="Ubiquitin-like 2" evidence="4">
    <location>
        <begin position="1540"/>
        <end position="1595"/>
    </location>
</feature>
<feature type="domain" description="Peptidase C16" evidence="5">
    <location>
        <begin position="1609"/>
        <end position="1873"/>
    </location>
</feature>
<feature type="domain" description="Nucleic acid-binding" evidence="9">
    <location>
        <begin position="1886"/>
        <end position="1996"/>
    </location>
</feature>
<feature type="domain" description="G2M" evidence="22">
    <location>
        <begin position="2021"/>
        <end position="2130"/>
    </location>
</feature>
<feature type="domain" description="3Ecto" evidence="21">
    <location>
        <begin position="2222"/>
        <end position="2292"/>
    </location>
</feature>
<feature type="domain" description="CoV Nsp3 Y" evidence="20">
    <location>
        <begin position="2370"/>
        <end position="2738"/>
    </location>
</feature>
<feature type="domain" description="Nsp4C" evidence="10">
    <location>
        <begin position="3140"/>
        <end position="3238"/>
    </location>
</feature>
<feature type="domain" description="Peptidase C30" evidence="7">
    <location>
        <begin position="3239"/>
        <end position="3544"/>
    </location>
</feature>
<feature type="domain" description="RdRp Nsp7 cofactor" evidence="11">
    <location>
        <begin position="3835"/>
        <end position="3917"/>
    </location>
</feature>
<feature type="domain" description="RdRp Nsp8 cofactor" evidence="12">
    <location>
        <begin position="3918"/>
        <end position="4115"/>
    </location>
</feature>
<feature type="domain" description="Nsp9 ssRNA-binding" evidence="13">
    <location>
        <begin position="4116"/>
        <end position="4228"/>
    </location>
</feature>
<feature type="domain" description="ExoN/MTase coactivator" evidence="14">
    <location>
        <begin position="4229"/>
        <end position="4367"/>
    </location>
</feature>
<feature type="zinc finger region" description="C4-type" evidence="5">
    <location>
        <begin position="1727"/>
        <end position="1764"/>
    </location>
</feature>
<feature type="zinc finger region" evidence="1">
    <location>
        <begin position="4302"/>
        <end position="4318"/>
    </location>
</feature>
<feature type="zinc finger region" evidence="1">
    <location>
        <begin position="4345"/>
        <end position="4358"/>
    </location>
</feature>
<feature type="region of interest" description="C2H2" evidence="17">
    <location>
        <begin position="200"/>
        <end position="236"/>
    </location>
</feature>
<feature type="region of interest" description="C4" evidence="17">
    <location>
        <begin position="323"/>
        <end position="344"/>
    </location>
</feature>
<feature type="region of interest" description="C2HC" evidence="17">
    <location>
        <begin position="370"/>
        <end position="416"/>
    </location>
</feature>
<feature type="region of interest" description="HD1" evidence="1">
    <location>
        <begin position="2201"/>
        <end position="2369"/>
    </location>
</feature>
<feature type="region of interest" description="Y1" evidence="20">
    <location>
        <begin position="2370"/>
        <end position="2460"/>
    </location>
</feature>
<feature type="region of interest" description="ZF1" evidence="20">
    <location>
        <begin position="2374"/>
        <end position="2387"/>
    </location>
</feature>
<feature type="region of interest" description="ZF2" evidence="20">
    <location>
        <begin position="2420"/>
        <end position="2430"/>
    </location>
</feature>
<feature type="region of interest" description="CoV-Y" evidence="20">
    <location>
        <begin position="2461"/>
        <end position="2738"/>
    </location>
</feature>
<feature type="region of interest" description="Y2" evidence="20">
    <location>
        <begin position="2461"/>
        <end position="2555"/>
    </location>
</feature>
<feature type="region of interest" description="Y3" evidence="20">
    <location>
        <begin position="2556"/>
        <end position="2637"/>
    </location>
</feature>
<feature type="region of interest" description="Y4" evidence="20">
    <location>
        <begin position="2638"/>
        <end position="2738"/>
    </location>
</feature>
<feature type="region of interest" description="HD2" evidence="1">
    <location>
        <begin position="2753"/>
        <end position="3160"/>
    </location>
</feature>
<feature type="region of interest" description="HD3" evidence="1">
    <location>
        <begin position="3562"/>
        <end position="3774"/>
    </location>
</feature>
<feature type="active site" description="For PL-PRO activity" evidence="5">
    <location>
        <position position="1649"/>
    </location>
</feature>
<feature type="active site" description="For PL-PRO activity" evidence="5">
    <location>
        <position position="1810"/>
    </location>
</feature>
<feature type="active site" description="For PL-PRO activity" evidence="5">
    <location>
        <position position="1824"/>
    </location>
</feature>
<feature type="active site" description="For 3CL-PRO activity" evidence="7">
    <location>
        <position position="3279"/>
    </location>
</feature>
<feature type="active site" description="For 3CL-PRO activity" evidence="7">
    <location>
        <position position="3383"/>
    </location>
</feature>
<feature type="binding site" evidence="17">
    <location>
        <position position="200"/>
    </location>
    <ligand>
        <name>Zn(2+)</name>
        <dbReference type="ChEBI" id="CHEBI:29105"/>
        <label>1</label>
    </ligand>
</feature>
<feature type="binding site" evidence="17">
    <location>
        <position position="231"/>
    </location>
    <ligand>
        <name>Zn(2+)</name>
        <dbReference type="ChEBI" id="CHEBI:29105"/>
        <label>1</label>
    </ligand>
</feature>
<feature type="binding site" evidence="17">
    <location>
        <position position="234"/>
    </location>
    <ligand>
        <name>Zn(2+)</name>
        <dbReference type="ChEBI" id="CHEBI:29105"/>
        <label>1</label>
    </ligand>
</feature>
<feature type="binding site" evidence="17">
    <location>
        <position position="236"/>
    </location>
    <ligand>
        <name>Zn(2+)</name>
        <dbReference type="ChEBI" id="CHEBI:29105"/>
        <label>1</label>
    </ligand>
</feature>
<feature type="binding site" evidence="17">
    <location>
        <position position="323"/>
    </location>
    <ligand>
        <name>Zn(2+)</name>
        <dbReference type="ChEBI" id="CHEBI:29105"/>
        <label>2</label>
    </ligand>
</feature>
<feature type="binding site" evidence="17">
    <location>
        <position position="326"/>
    </location>
    <ligand>
        <name>Zn(2+)</name>
        <dbReference type="ChEBI" id="CHEBI:29105"/>
        <label>2</label>
    </ligand>
</feature>
<feature type="binding site" evidence="17">
    <location>
        <position position="341"/>
    </location>
    <ligand>
        <name>Zn(2+)</name>
        <dbReference type="ChEBI" id="CHEBI:29105"/>
        <label>2</label>
    </ligand>
</feature>
<feature type="binding site" evidence="17">
    <location>
        <position position="344"/>
    </location>
    <ligand>
        <name>Zn(2+)</name>
        <dbReference type="ChEBI" id="CHEBI:29105"/>
        <label>2</label>
    </ligand>
</feature>
<feature type="binding site" evidence="17">
    <location>
        <position position="370"/>
    </location>
    <ligand>
        <name>Zn(2+)</name>
        <dbReference type="ChEBI" id="CHEBI:29105"/>
        <label>3</label>
    </ligand>
</feature>
<feature type="binding site" evidence="17">
    <location>
        <position position="373"/>
    </location>
    <ligand>
        <name>Zn(2+)</name>
        <dbReference type="ChEBI" id="CHEBI:29105"/>
        <label>3</label>
    </ligand>
</feature>
<feature type="binding site" evidence="17">
    <location>
        <position position="382"/>
    </location>
    <ligand>
        <name>Zn(2+)</name>
        <dbReference type="ChEBI" id="CHEBI:29105"/>
        <label>3</label>
    </ligand>
</feature>
<feature type="binding site" evidence="17">
    <location>
        <position position="416"/>
    </location>
    <ligand>
        <name>Zn(2+)</name>
        <dbReference type="ChEBI" id="CHEBI:29105"/>
        <label>3</label>
    </ligand>
</feature>
<feature type="binding site" evidence="5">
    <location>
        <position position="1727"/>
    </location>
    <ligand>
        <name>Zn(2+)</name>
        <dbReference type="ChEBI" id="CHEBI:29105"/>
        <label>4</label>
    </ligand>
</feature>
<feature type="binding site" evidence="5">
    <location>
        <position position="1730"/>
    </location>
    <ligand>
        <name>Zn(2+)</name>
        <dbReference type="ChEBI" id="CHEBI:29105"/>
        <label>4</label>
    </ligand>
</feature>
<feature type="binding site" evidence="5">
    <location>
        <position position="1762"/>
    </location>
    <ligand>
        <name>Zn(2+)</name>
        <dbReference type="ChEBI" id="CHEBI:29105"/>
        <label>4</label>
    </ligand>
</feature>
<feature type="binding site" evidence="5">
    <location>
        <position position="1764"/>
    </location>
    <ligand>
        <name>Zn(2+)</name>
        <dbReference type="ChEBI" id="CHEBI:29105"/>
        <label>4</label>
    </ligand>
</feature>
<feature type="binding site" evidence="20">
    <location>
        <position position="2374"/>
    </location>
    <ligand>
        <name>Zn(2+)</name>
        <dbReference type="ChEBI" id="CHEBI:29105"/>
        <label>5</label>
    </ligand>
</feature>
<feature type="binding site" evidence="20">
    <location>
        <position position="2379"/>
    </location>
    <ligand>
        <name>Zn(2+)</name>
        <dbReference type="ChEBI" id="CHEBI:29105"/>
        <label>5</label>
    </ligand>
</feature>
<feature type="binding site" evidence="20">
    <location>
        <position position="2384"/>
    </location>
    <ligand>
        <name>Zn(2+)</name>
        <dbReference type="ChEBI" id="CHEBI:29105"/>
        <label>5</label>
    </ligand>
</feature>
<feature type="binding site" evidence="20">
    <location>
        <position position="2387"/>
    </location>
    <ligand>
        <name>Zn(2+)</name>
        <dbReference type="ChEBI" id="CHEBI:29105"/>
        <label>5</label>
    </ligand>
</feature>
<feature type="binding site" evidence="20">
    <location>
        <position position="2420"/>
    </location>
    <ligand>
        <name>Zn(2+)</name>
        <dbReference type="ChEBI" id="CHEBI:29105"/>
        <label>6</label>
    </ligand>
</feature>
<feature type="binding site" evidence="20">
    <location>
        <position position="2423"/>
    </location>
    <ligand>
        <name>Zn(2+)</name>
        <dbReference type="ChEBI" id="CHEBI:29105"/>
        <label>6</label>
    </ligand>
</feature>
<feature type="binding site" evidence="20">
    <location>
        <position position="2427"/>
    </location>
    <ligand>
        <name>Zn(2+)</name>
        <dbReference type="ChEBI" id="CHEBI:29105"/>
        <label>6</label>
    </ligand>
</feature>
<feature type="binding site" evidence="20">
    <location>
        <position position="2430"/>
    </location>
    <ligand>
        <name>Zn(2+)</name>
        <dbReference type="ChEBI" id="CHEBI:29105"/>
        <label>6</label>
    </ligand>
</feature>
<feature type="binding site" evidence="14">
    <location>
        <position position="4302"/>
    </location>
    <ligand>
        <name>Zn(2+)</name>
        <dbReference type="ChEBI" id="CHEBI:29105"/>
        <label>7</label>
    </ligand>
</feature>
<feature type="binding site" evidence="14">
    <location>
        <position position="4305"/>
    </location>
    <ligand>
        <name>Zn(2+)</name>
        <dbReference type="ChEBI" id="CHEBI:29105"/>
        <label>7</label>
    </ligand>
</feature>
<feature type="binding site" evidence="14">
    <location>
        <position position="4311"/>
    </location>
    <ligand>
        <name>Zn(2+)</name>
        <dbReference type="ChEBI" id="CHEBI:29105"/>
        <label>7</label>
    </ligand>
</feature>
<feature type="binding site" evidence="14">
    <location>
        <position position="4318"/>
    </location>
    <ligand>
        <name>Zn(2+)</name>
        <dbReference type="ChEBI" id="CHEBI:29105"/>
        <label>7</label>
    </ligand>
</feature>
<feature type="binding site" evidence="14">
    <location>
        <position position="4345"/>
    </location>
    <ligand>
        <name>Zn(2+)</name>
        <dbReference type="ChEBI" id="CHEBI:29105"/>
        <label>8</label>
    </ligand>
</feature>
<feature type="binding site" evidence="14">
    <location>
        <position position="4348"/>
    </location>
    <ligand>
        <name>Zn(2+)</name>
        <dbReference type="ChEBI" id="CHEBI:29105"/>
        <label>8</label>
    </ligand>
</feature>
<feature type="binding site" evidence="14">
    <location>
        <position position="4356"/>
    </location>
    <ligand>
        <name>Zn(2+)</name>
        <dbReference type="ChEBI" id="CHEBI:29105"/>
        <label>8</label>
    </ligand>
</feature>
<feature type="binding site" evidence="14">
    <location>
        <position position="4358"/>
    </location>
    <ligand>
        <name>Zn(2+)</name>
        <dbReference type="ChEBI" id="CHEBI:29105"/>
        <label>8</label>
    </ligand>
</feature>
<feature type="site" description="Cleavage" evidence="1">
    <location>
        <begin position="179"/>
        <end position="180"/>
    </location>
</feature>
<feature type="site" description="Cleavage; by PL-PRO" evidence="1">
    <location>
        <begin position="818"/>
        <end position="819"/>
    </location>
</feature>
<feature type="site" description="Cleavage; by PL-PRO" evidence="1">
    <location>
        <begin position="3238"/>
        <end position="3239"/>
    </location>
</feature>
<feature type="site" description="Cleavage; by 3CL-PRO" evidence="1">
    <location>
        <begin position="3544"/>
        <end position="3545"/>
    </location>
</feature>
<feature type="site" description="Cleavage; by 3CL-PRO" evidence="1">
    <location>
        <begin position="3834"/>
        <end position="3835"/>
    </location>
</feature>
<feature type="site" description="Cleavage; by 3CL-PRO" evidence="1">
    <location>
        <begin position="3917"/>
        <end position="3918"/>
    </location>
</feature>
<feature type="site" description="Cleavage; by 3CL-PRO" evidence="1">
    <location>
        <begin position="4115"/>
        <end position="4116"/>
    </location>
</feature>
<feature type="site" description="Cleavage; by 3CL-PRO" evidence="1">
    <location>
        <begin position="4228"/>
        <end position="4229"/>
    </location>
</feature>
<feature type="site" description="Cleavage; by 3CL-PRO" evidence="1">
    <location>
        <begin position="4367"/>
        <end position="4368"/>
    </location>
</feature>
<feature type="disulfide bond" evidence="21">
    <location>
        <begin position="2238"/>
        <end position="2266"/>
    </location>
</feature>
<feature type="disulfide bond" evidence="21">
    <location>
        <begin position="2257"/>
        <end position="2263"/>
    </location>
</feature>
<evidence type="ECO:0000250" key="1"/>
<evidence type="ECO:0000250" key="2">
    <source>
        <dbReference type="UniProtKB" id="P0DTC1"/>
    </source>
</evidence>
<evidence type="ECO:0000255" key="3"/>
<evidence type="ECO:0000255" key="4">
    <source>
        <dbReference type="PROSITE-ProRule" id="PRU00214"/>
    </source>
</evidence>
<evidence type="ECO:0000255" key="5">
    <source>
        <dbReference type="PROSITE-ProRule" id="PRU00444"/>
    </source>
</evidence>
<evidence type="ECO:0000255" key="6">
    <source>
        <dbReference type="PROSITE-ProRule" id="PRU00490"/>
    </source>
</evidence>
<evidence type="ECO:0000255" key="7">
    <source>
        <dbReference type="PROSITE-ProRule" id="PRU00772"/>
    </source>
</evidence>
<evidence type="ECO:0000255" key="8">
    <source>
        <dbReference type="PROSITE-ProRule" id="PRU01289"/>
    </source>
</evidence>
<evidence type="ECO:0000255" key="9">
    <source>
        <dbReference type="PROSITE-ProRule" id="PRU01290"/>
    </source>
</evidence>
<evidence type="ECO:0000255" key="10">
    <source>
        <dbReference type="PROSITE-ProRule" id="PRU01291"/>
    </source>
</evidence>
<evidence type="ECO:0000255" key="11">
    <source>
        <dbReference type="PROSITE-ProRule" id="PRU01294"/>
    </source>
</evidence>
<evidence type="ECO:0000255" key="12">
    <source>
        <dbReference type="PROSITE-ProRule" id="PRU01295"/>
    </source>
</evidence>
<evidence type="ECO:0000255" key="13">
    <source>
        <dbReference type="PROSITE-ProRule" id="PRU01296"/>
    </source>
</evidence>
<evidence type="ECO:0000255" key="14">
    <source>
        <dbReference type="PROSITE-ProRule" id="PRU01297"/>
    </source>
</evidence>
<evidence type="ECO:0000255" key="15">
    <source>
        <dbReference type="PROSITE-ProRule" id="PRU01307"/>
    </source>
</evidence>
<evidence type="ECO:0000255" key="16">
    <source>
        <dbReference type="PROSITE-ProRule" id="PRU01308"/>
    </source>
</evidence>
<evidence type="ECO:0000255" key="17">
    <source>
        <dbReference type="PROSITE-ProRule" id="PRU01333"/>
    </source>
</evidence>
<evidence type="ECO:0000255" key="18">
    <source>
        <dbReference type="PROSITE-ProRule" id="PRU01334"/>
    </source>
</evidence>
<evidence type="ECO:0000255" key="19">
    <source>
        <dbReference type="PROSITE-ProRule" id="PRU01335"/>
    </source>
</evidence>
<evidence type="ECO:0000255" key="20">
    <source>
        <dbReference type="PROSITE-ProRule" id="PRU01336"/>
    </source>
</evidence>
<evidence type="ECO:0000255" key="21">
    <source>
        <dbReference type="PROSITE-ProRule" id="PRU01337"/>
    </source>
</evidence>
<evidence type="ECO:0000255" key="22">
    <source>
        <dbReference type="PROSITE-ProRule" id="PRU01338"/>
    </source>
</evidence>
<evidence type="ECO:0000305" key="23"/>
<sequence length="4380" mass="486337">MESLVLGINEKTHVQLSLPVLQVRDVLVRGFGDSVEEALSEAREHLKSGTCGIVELEKGVLPQPEQPYVFIKRSDAQGTDHGHRVRELVAELDGVQYGRSGITLGVLVPHVGETPIAYRNVLLRKNGNKGAGGHSFGIDLKSYDLGDELGTDPIEDYEQNWNTKHGSGVLRELTRELNGGALTRYVDNNFCGPDGYPLECIKDLLARAGKSMCTLSEQLDYIESKRGVYCCRDHGHEIAWFTERSDKSYEHQTPFEIKSAKKFDTFKGECPKFVFPLNSKVKVIQPRVEKKKTEGFMGRIRSVYPVATPQECNNMHLSTLMKCNHCDEVSWQTCDFLKATCEQCGTENLVSEGPNTCGYLPTNAVVKMPCPACQDPEIGPEHSAADYHNHSNIETRLRKGGRTRCFGGCVFAYVGCYNKRAYWVPRASADIGSGHTGITGDNVETLNEDLLEILSRERVNINIVGDFQLNEEVAIILASFSASTSAFIDTIKSLDYKSFKTIVESCGNYKVTKGKPIKGAWNIGQHRSVLTPLCGFPSQAAGVIRSIFSRTLDAANHSIPDLQRAAVTILDSISEQSLRLVDAMVYTSNLLTNSVIIMAYVTGGLVQQTSQWLSNLLDTTVEKLRPIFAWIEAKLSAGVEFLKDAWEILKFLITGVFDIVKGQIQVASDNIKDCVKCFVDVVNKALEMCIDQVTIAGAKLRSLNLGEVFIAQSKGLYRQCIRGKEQLQLLMPLKAPKEVTFLEGDSHDTVLTSEEVVLKNGELEALETPVDSFTNGAVVGTPVCINGLMLLEIKANEQYCALSPGLLATNNVFRLKGGAPTKGVTFGEDTVVEVQGYKNVRITFELDERVDKVLNEKCSVYTVESGTEVTEFACVVAEAVVKTLQPVSDLLTNMGIDLDEWSVATFYLFDDSGEEKLSSRMYCSFYPPDEEEDCEEYEEEEEVSERTCEHEYGTEEDYKGLPLEFGASTDIIQVEEQEEEDWLDDAVEAEPEPEPLHEEPVNQLTGYLKLTDNVAIKCVDIVEEAQNANPMVIVNAANIHLKHGGGVAGALNKATNGAMQKESDHYIKLNGPLTVGGSCLLSGHNLAKKCLHVVGPNLNAGEDIQLLKAAYENFNSQDILLAPLLSAGIFGAKPLQSLQMCVQTVRTQVYIVVNDKVLYEQVVMDYLDSLKPKVEAPKQEVLPKAEYPKVDEKSVVQKTIDVKPKIKACIDEVTTTLEETKFLTNKLLLFTDINGKLYQDSKNMLRGEDMSFLEKDAPYMVGDVITSGDITCVVIPSKKAGGTTEMLSRALKKVPINEYITTYPGQGCAGYTLEEAKTALKKCKSAFYVLPSETPNAKEEILGTVSWNLREMLAHAEETRKLMPVCMDVRAIMATIQRKYKGIKIQEGIVDYGVRFFFYTSKEPVASIITKLNSLNEPLVTMPIGYVTHGFNLEEAARCMRSLKAPAIVSVSSPDAVTTYNGYLTSSSKTSEDHFVETVSLAGSYRDWSYSGQRTELGVEFLKRGEKIVYHTLESPVKFHLDGEVLPLDKLKSLLSLREVKTIKVFTTVDNTNLHTQLVDMSMTYGQQLGPTYLEGADVTKIKPHVNHEGKTFFVLPSDDTLRSEAFEYYHTLDESFLGRYMSALNHTKKWKFPQVGGLTSIKWADNNCYLSSVLLALQQIEVKFNAPALQEAYYRARAGDAANFCALILAYSNKTVGELGDVRETMTHLLQHANLESAKRVLNVVCKHCGQKTTTLTGVEAVMYMGTLSYDNLKMGVSIPCVCGRDATQYLVQQESSFVMMSAPPAEYKLQQGTFLCANEYTGNYQCGHYTHITAKETLYRIDGAHLTKMSEYKGPVTDVFYKETSYTTTIKPVSYKLDGVTYTEIEPKLDGYYKKDNAYYTEQPIDLIPTQPLPNASFDNFKLTCSNTKFADDLNQMTGFTKPASRELSVTFFPDLNGDVVAIDYRHYSASFKKGAKLLHKPIVWHINQATTKTTFKPNTWCLRCLWSTKPVDTSNSFEVLAVEDTQGMDNLACESQQPTPEEVVENPTIQKEVIECDVKTTEVVGNVILKPSDEGVKVTQELDHEDLMAAYVENTSITIKKPNELSLALGLKTIATHGIAAINSVPWGKILAYVKPFLGQAAVTTSNCAKRLVQRMFNNYMPYVLTLLFQLCTFTKSTNSRIRASLPTTIAKNSVRGIVRLCLDAGINYVKSPKFSKLFTIAMWLLLLSICLGSLIYVTAALGVLLSNFGAPSYCSGVRESYLNSSNVTTMDFCEGSFPCSVCLSGLDSLDSYPALETIQVTISSYKLDLTILGLAAEWFFAYMLFTKFFYLLGLSAIMQVFFGYFASHFISNSWLMWFIISIVQMAPVSAMVRMYIFFASFYYIWKSYVHIMDGCTSSTCMMCYKRNRATRVECTTIVNGMKRSFYVYANGGRGFCKTHNWNCLNCDTFCAGSTFISDEVARDLSLQFKRPINPTDQSSYVVDSVAVKNGALHLYFDKAGQKTYERHPLSHFVNLDNLRANNTKGSLPINVIVFDGKSKCDESAAKSASVYYSQLMCQPILLLDQALVSDVGDSTEVSVKMFDAYVDTFSATFSVPMEKLKALVATAHSELAKGVALDGVLSTFVSASRQGVVDTDVDTKDVIECLKLSHHSDLEVTGDSCNNFMLTYNKVENMTPRDLGACIDCNARHINAQVARSHNVSLIWNVKDYMSLSEQLRKQIRSAAKKNNIPFRLTCATTRQVVNVITTKISLKGGKIVSTWFKIMLKATLLCVLAALVCYIVMPVHILSVHGGYTNEIIGYKAIQDGVTRDIVSTDDCFANKHAGFDSWFSQRGGSYKNDKSCPVVAAIITREIGFIVPGLPGTVLRAINGDFLHFLPRVFSAVGNICYTPSKLIEYSDFSTSACVLAAECTIFKDAMGKPVPYCYDTNLLEGSISYSELRPDTRYVLMDGSIIQFPNAYLEGSVRVVTTFDAEYCRHGTCERSEAGICLSTSGRWVLNNEHYRALPGVFCGVDAMNLIANIFTPLVQPVGALDVSASVVAGGIIAILVTCAAYYFMKFRRAFGEYNHVVAANAPLFLMSFTILCLAPAYSFLPGVYSVFYLYLTFYFTNDVSFLAHLQWFAMFSPIVPFWITAIYVFCISLKHFHWFFNNYLRKRVVFNGVTFSTFEEAALCTFLLNKEMYLKLRSETLLPLTQYNRYLALYNKYKYFSGALDTTSYREAACCHLAKALNDFSNSGADVLYQPPQTSITSAVLQSGFRKMAFPSGKVEGCMVQVTCGTTTLNGLWLDDTVYCPRHVICTAEDMLNPNYEDLLIRKSNHSFLVQAGNVQLRVIGHSMQNCLLRLKVDTSNPKTPKYKFVRIQPGQTFSVLACYNGSPSGVYQCAMRPNHTIKGSFLNGSCGSVGFNIDYDCVSFCYMHHMELPTEVHAGTDLEGKFYGPFVDRQTAQAAGTDTTITLNVLAWLYAAVINGDRWFLNRFTTTLNDFNLVAMKYNYEPLTQDHVDILGPLSAQTGIAVLDMCAALKELLQNGMNGRTILGSTILEDEFTPFDVVRQCSGVTFQGKFKRIVKGTHHWMLLTFLTSLLILVQSTQWSLFFFVYENAFLPFTLGIMAVAACAMLLVKHKHAFLCLFLLPSLATVAYFNMVYMPASWVMRIMTWLELADTSLSGYRLKDCVMYASALVLLVLMTARTVYDDAARRVWTLMNVITLVYKVYYGNALDQAISMWALVISVTSNYSGVVTTIMFLARAIVFVCVEYYPLLFITGNTLQCIMLVYCFLGYCCCCYFGLFCLLNRYFRLTLGVYDYLVSTQEFRYMNSQGLLPPKSSIDAFKLNIKLLGIGGKPCIKVATVQSKMSDVKCTSVVLLSVLQQLRVESSSKLWAQCVQLHNDILLAKDTTEAFEKMVSLLSVLLSMQGAVDINKLCEEMLDNRATLQAIASEFSSLPSYAAYATAQEAYEQAVANGDSEVVLKKLKKSLNVAKSEFDRNAAMQRKLEKMADQAMTQMYKQARSEDKRAKVTSAMQTMLFTMLRKLDNDALNNIINNARDGCVPLNIIPLTTAAKLMVVVPDYGTYKNTCDGNTFTYASALWEIQQVVDADSKIVQLSEINMENSSNLAWPLIVTALRANSAVKLQNNELSPVALRQMSCAAGTTQTACTDDNALAYYNNSKGGRFVLALLSDHQDLKWARFPKSDGTGTIYTELEPPCRFVTDTPKGPKVKYLHFIKGLNNLNRGMVLGSLAATVRLQAGNATEVPANSTVLSFCAFAVDPAKAYKDYLASGGQPITNCVKMLCTHTGTGQAITVTPEANMDQESFGGASCCLYCRCHIDHPNPKGFCDLKGKYVQIPTTCANDPVGFTLRNTVCTVCGMWKGYGCSCDQLREPMMQSADASTFLNGFAV</sequence>
<dbReference type="EC" id="3.4.19.12"/>
<dbReference type="EC" id="3.4.22.-"/>
<dbReference type="EC" id="3.4.22.69"/>
<dbReference type="EC" id="2.7.7.50"/>
<dbReference type="EMBL" id="DQ071615">
    <property type="protein sequence ID" value="AAZ67050.1"/>
    <property type="molecule type" value="Genomic_RNA"/>
</dbReference>
<dbReference type="BMRB" id="P0C6T7"/>
<dbReference type="SMR" id="P0C6T7"/>
<dbReference type="Proteomes" id="UP000006570">
    <property type="component" value="Genome"/>
</dbReference>
<dbReference type="GO" id="GO:0033644">
    <property type="term" value="C:host cell membrane"/>
    <property type="evidence" value="ECO:0007669"/>
    <property type="project" value="UniProtKB-SubCell"/>
</dbReference>
<dbReference type="GO" id="GO:0044220">
    <property type="term" value="C:host cell perinuclear region of cytoplasm"/>
    <property type="evidence" value="ECO:0007669"/>
    <property type="project" value="UniProtKB-SubCell"/>
</dbReference>
<dbReference type="GO" id="GO:0016020">
    <property type="term" value="C:membrane"/>
    <property type="evidence" value="ECO:0007669"/>
    <property type="project" value="UniProtKB-KW"/>
</dbReference>
<dbReference type="GO" id="GO:0004843">
    <property type="term" value="F:cysteine-type deubiquitinase activity"/>
    <property type="evidence" value="ECO:0007669"/>
    <property type="project" value="UniProtKB-EC"/>
</dbReference>
<dbReference type="GO" id="GO:0004197">
    <property type="term" value="F:cysteine-type endopeptidase activity"/>
    <property type="evidence" value="ECO:0007669"/>
    <property type="project" value="InterPro"/>
</dbReference>
<dbReference type="GO" id="GO:0004519">
    <property type="term" value="F:endonuclease activity"/>
    <property type="evidence" value="ECO:0007669"/>
    <property type="project" value="UniProtKB-KW"/>
</dbReference>
<dbReference type="GO" id="GO:0002151">
    <property type="term" value="F:G-quadruplex RNA binding"/>
    <property type="evidence" value="ECO:0007669"/>
    <property type="project" value="InterPro"/>
</dbReference>
<dbReference type="GO" id="GO:0008168">
    <property type="term" value="F:methyltransferase activity"/>
    <property type="evidence" value="ECO:0007669"/>
    <property type="project" value="UniProtKB-KW"/>
</dbReference>
<dbReference type="GO" id="GO:0008242">
    <property type="term" value="F:omega peptidase activity"/>
    <property type="evidence" value="ECO:0007669"/>
    <property type="project" value="InterPro"/>
</dbReference>
<dbReference type="GO" id="GO:0003727">
    <property type="term" value="F:single-stranded RNA binding"/>
    <property type="evidence" value="ECO:0007669"/>
    <property type="project" value="InterPro"/>
</dbReference>
<dbReference type="GO" id="GO:0008270">
    <property type="term" value="F:zinc ion binding"/>
    <property type="evidence" value="ECO:0007669"/>
    <property type="project" value="UniProtKB-KW"/>
</dbReference>
<dbReference type="GO" id="GO:0032259">
    <property type="term" value="P:methylation"/>
    <property type="evidence" value="ECO:0007669"/>
    <property type="project" value="UniProtKB-KW"/>
</dbReference>
<dbReference type="GO" id="GO:0006508">
    <property type="term" value="P:proteolysis"/>
    <property type="evidence" value="ECO:0007669"/>
    <property type="project" value="UniProtKB-KW"/>
</dbReference>
<dbReference type="GO" id="GO:0010506">
    <property type="term" value="P:regulation of autophagy"/>
    <property type="evidence" value="ECO:0007669"/>
    <property type="project" value="InterPro"/>
</dbReference>
<dbReference type="GO" id="GO:0039520">
    <property type="term" value="P:symbiont-mediated activation of host autophagy"/>
    <property type="evidence" value="ECO:0007669"/>
    <property type="project" value="UniProtKB-KW"/>
</dbReference>
<dbReference type="GO" id="GO:0039595">
    <property type="term" value="P:symbiont-mediated degradation of host mRNA"/>
    <property type="evidence" value="ECO:0007669"/>
    <property type="project" value="UniProtKB-KW"/>
</dbReference>
<dbReference type="GO" id="GO:0039648">
    <property type="term" value="P:symbiont-mediated perturbation of host ubiquitin-like protein modification"/>
    <property type="evidence" value="ECO:0007669"/>
    <property type="project" value="UniProtKB-KW"/>
</dbReference>
<dbReference type="GO" id="GO:0039548">
    <property type="term" value="P:symbiont-mediated suppression of host cytoplasmic pattern recognition receptor signaling pathway via inhibition of IRF3 activity"/>
    <property type="evidence" value="ECO:0007669"/>
    <property type="project" value="UniProtKB-KW"/>
</dbReference>
<dbReference type="GO" id="GO:0039657">
    <property type="term" value="P:symbiont-mediated suppression of host gene expression"/>
    <property type="evidence" value="ECO:0007669"/>
    <property type="project" value="UniProtKB-KW"/>
</dbReference>
<dbReference type="GO" id="GO:0039579">
    <property type="term" value="P:symbiont-mediated suppression of host ISG15-protein conjugation"/>
    <property type="evidence" value="ECO:0007669"/>
    <property type="project" value="UniProtKB-KW"/>
</dbReference>
<dbReference type="GO" id="GO:0039502">
    <property type="term" value="P:symbiont-mediated suppression of host type I interferon-mediated signaling pathway"/>
    <property type="evidence" value="ECO:0007669"/>
    <property type="project" value="UniProtKB-KW"/>
</dbReference>
<dbReference type="GO" id="GO:0019079">
    <property type="term" value="P:viral genome replication"/>
    <property type="evidence" value="ECO:0007669"/>
    <property type="project" value="InterPro"/>
</dbReference>
<dbReference type="GO" id="GO:0019082">
    <property type="term" value="P:viral protein processing"/>
    <property type="evidence" value="ECO:0007669"/>
    <property type="project" value="InterPro"/>
</dbReference>
<dbReference type="GO" id="GO:0075523">
    <property type="term" value="P:viral translational frameshifting"/>
    <property type="evidence" value="ECO:0007669"/>
    <property type="project" value="UniProtKB-KW"/>
</dbReference>
<dbReference type="CDD" id="cd21560">
    <property type="entry name" value="betaCoV-Nsp6"/>
    <property type="match status" value="1"/>
</dbReference>
<dbReference type="CDD" id="cd21516">
    <property type="entry name" value="betaCoV_Nsp2_SARS-like"/>
    <property type="match status" value="1"/>
</dbReference>
<dbReference type="CDD" id="cd21666">
    <property type="entry name" value="betaCoV_Nsp5_Mpro"/>
    <property type="match status" value="1"/>
</dbReference>
<dbReference type="CDD" id="cd21827">
    <property type="entry name" value="betaCoV_Nsp7"/>
    <property type="match status" value="1"/>
</dbReference>
<dbReference type="CDD" id="cd21831">
    <property type="entry name" value="betaCoV_Nsp8"/>
    <property type="match status" value="1"/>
</dbReference>
<dbReference type="CDD" id="cd21898">
    <property type="entry name" value="betaCoV_Nsp9"/>
    <property type="match status" value="1"/>
</dbReference>
<dbReference type="CDD" id="cd21732">
    <property type="entry name" value="betaCoV_PLPro"/>
    <property type="match status" value="1"/>
</dbReference>
<dbReference type="CDD" id="cd21872">
    <property type="entry name" value="CoV_Nsp10"/>
    <property type="match status" value="1"/>
</dbReference>
<dbReference type="CDD" id="cd21473">
    <property type="entry name" value="cv_Nsp4_TM"/>
    <property type="match status" value="1"/>
</dbReference>
<dbReference type="CDD" id="cd21563">
    <property type="entry name" value="Macro_cv_SUD-M_Nsp3-like"/>
    <property type="match status" value="1"/>
</dbReference>
<dbReference type="CDD" id="cd21562">
    <property type="entry name" value="Macro_cv_SUD-N_Nsp3-like"/>
    <property type="match status" value="1"/>
</dbReference>
<dbReference type="CDD" id="cd21557">
    <property type="entry name" value="Macro_X_Nsp3-like"/>
    <property type="match status" value="1"/>
</dbReference>
<dbReference type="CDD" id="cd22662">
    <property type="entry name" value="SARS-CoV-like_Nsp1_C"/>
    <property type="match status" value="1"/>
</dbReference>
<dbReference type="CDD" id="cd21796">
    <property type="entry name" value="SARS-CoV-like_Nsp1_N"/>
    <property type="match status" value="1"/>
</dbReference>
<dbReference type="CDD" id="cd21814">
    <property type="entry name" value="SARS-CoV-like_Nsp3_betaSM"/>
    <property type="match status" value="1"/>
</dbReference>
<dbReference type="CDD" id="cd21822">
    <property type="entry name" value="SARS-CoV-like_Nsp3_NAB"/>
    <property type="match status" value="1"/>
</dbReference>
<dbReference type="CDD" id="cd21525">
    <property type="entry name" value="SUD_C_SARS-CoV_Nsp3"/>
    <property type="match status" value="1"/>
</dbReference>
<dbReference type="CDD" id="cd21717">
    <property type="entry name" value="TM_Y_SARS-CoV-like_Nsp3_C"/>
    <property type="match status" value="1"/>
</dbReference>
<dbReference type="CDD" id="cd21467">
    <property type="entry name" value="Ubl1_cv_Nsp3_N-like"/>
    <property type="match status" value="1"/>
</dbReference>
<dbReference type="FunFam" id="1.10.8.370:FF:000001">
    <property type="entry name" value="Orf1a polyprotein"/>
    <property type="match status" value="1"/>
</dbReference>
<dbReference type="FunFam" id="2.40.10.250:FF:000001">
    <property type="entry name" value="Orf1a polyprotein"/>
    <property type="match status" value="1"/>
</dbReference>
<dbReference type="FunFam" id="2.60.120.1680:FF:000001">
    <property type="entry name" value="Orf1a polyprotein"/>
    <property type="match status" value="1"/>
</dbReference>
<dbReference type="FunFam" id="3.40.220.30:FF:000001">
    <property type="entry name" value="Orf1a polyprotein"/>
    <property type="match status" value="1"/>
</dbReference>
<dbReference type="FunFam" id="1.10.150.420:FF:000001">
    <property type="entry name" value="Replicase polyprotein"/>
    <property type="match status" value="1"/>
</dbReference>
<dbReference type="FunFam" id="1.10.1840.10:FF:000001">
    <property type="entry name" value="Replicase polyprotein 1a"/>
    <property type="match status" value="1"/>
</dbReference>
<dbReference type="FunFam" id="1.10.8.1190:FF:000001">
    <property type="entry name" value="Replicase polyprotein 1a"/>
    <property type="match status" value="1"/>
</dbReference>
<dbReference type="FunFam" id="2.40.10.10:FF:000033">
    <property type="entry name" value="Replicase polyprotein 1a"/>
    <property type="match status" value="1"/>
</dbReference>
<dbReference type="FunFam" id="3.40.220.20:FF:000001">
    <property type="entry name" value="Replicase polyprotein 1a"/>
    <property type="match status" value="1"/>
</dbReference>
<dbReference type="Gene3D" id="1.10.8.1190">
    <property type="match status" value="1"/>
</dbReference>
<dbReference type="Gene3D" id="2.60.120.1680">
    <property type="match status" value="1"/>
</dbReference>
<dbReference type="Gene3D" id="3.10.20.350">
    <property type="match status" value="1"/>
</dbReference>
<dbReference type="Gene3D" id="3.10.20.540">
    <property type="match status" value="1"/>
</dbReference>
<dbReference type="Gene3D" id="6.10.140.2090">
    <property type="match status" value="1"/>
</dbReference>
<dbReference type="Gene3D" id="1.10.150.420">
    <property type="entry name" value="Coronavirus nonstructural protein 4 C-terminus"/>
    <property type="match status" value="1"/>
</dbReference>
<dbReference type="Gene3D" id="3.40.30.150">
    <property type="entry name" value="Coronavirus polyprotein cleavage domain"/>
    <property type="match status" value="1"/>
</dbReference>
<dbReference type="Gene3D" id="3.40.220.10">
    <property type="entry name" value="Leucine Aminopeptidase, subunit E, domain 1"/>
    <property type="match status" value="1"/>
</dbReference>
<dbReference type="Gene3D" id="1.10.1840.10">
    <property type="entry name" value="main proteinase (3clpro) structure, domain 3"/>
    <property type="match status" value="1"/>
</dbReference>
<dbReference type="Gene3D" id="3.40.220.20">
    <property type="entry name" value="Nsp3, SUD-M subdomain"/>
    <property type="match status" value="1"/>
</dbReference>
<dbReference type="Gene3D" id="3.40.220.30">
    <property type="entry name" value="Nsp3, SUD-N subdomain"/>
    <property type="match status" value="1"/>
</dbReference>
<dbReference type="Gene3D" id="1.10.8.370">
    <property type="entry name" value="nsp7 replicase"/>
    <property type="match status" value="1"/>
</dbReference>
<dbReference type="Gene3D" id="3.30.70.3540">
    <property type="entry name" value="Nsp8 replicase, head domain"/>
    <property type="match status" value="1"/>
</dbReference>
<dbReference type="Gene3D" id="2.40.10.250">
    <property type="entry name" value="Replicase NSP9"/>
    <property type="match status" value="1"/>
</dbReference>
<dbReference type="Gene3D" id="3.40.50.11020">
    <property type="entry name" value="Replicase polyprotein, nucleic acid-binding domain"/>
    <property type="match status" value="1"/>
</dbReference>
<dbReference type="Gene3D" id="2.40.10.10">
    <property type="entry name" value="Trypsin-like serine proteases"/>
    <property type="match status" value="2"/>
</dbReference>
<dbReference type="InterPro" id="IPR046443">
    <property type="entry name" value="a/bCoV_NSP1_glob"/>
</dbReference>
<dbReference type="InterPro" id="IPR046442">
    <property type="entry name" value="bCoV_NSP1_C"/>
</dbReference>
<dbReference type="InterPro" id="IPR043613">
    <property type="entry name" value="CoV_NSP2_C"/>
</dbReference>
<dbReference type="InterPro" id="IPR047573">
    <property type="entry name" value="CoV_NSP2_M"/>
</dbReference>
<dbReference type="InterPro" id="IPR049894">
    <property type="entry name" value="COV_NSP3_3ECTO"/>
</dbReference>
<dbReference type="InterPro" id="IPR043611">
    <property type="entry name" value="CoV_NSP3_C"/>
</dbReference>
<dbReference type="InterPro" id="IPR047566">
    <property type="entry name" value="CoV_NSP3_Y"/>
</dbReference>
<dbReference type="InterPro" id="IPR032505">
    <property type="entry name" value="CoV_NSP4_C"/>
</dbReference>
<dbReference type="InterPro" id="IPR043612">
    <property type="entry name" value="CoV_NSP4_N"/>
</dbReference>
<dbReference type="InterPro" id="IPR022733">
    <property type="entry name" value="DPUP_SUD_C_bCoV"/>
</dbReference>
<dbReference type="InterPro" id="IPR002589">
    <property type="entry name" value="Macro_dom"/>
</dbReference>
<dbReference type="InterPro" id="IPR043472">
    <property type="entry name" value="Macro_dom-like"/>
</dbReference>
<dbReference type="InterPro" id="IPR044371">
    <property type="entry name" value="Macro_X_NSP3-like"/>
</dbReference>
<dbReference type="InterPro" id="IPR036333">
    <property type="entry name" value="NSP10_sf_CoV"/>
</dbReference>
<dbReference type="InterPro" id="IPR021590">
    <property type="entry name" value="NSP1_glob_bCoV"/>
</dbReference>
<dbReference type="InterPro" id="IPR038030">
    <property type="entry name" value="NSP1_glob_sf_bCoV"/>
</dbReference>
<dbReference type="InterPro" id="IPR043615">
    <property type="entry name" value="NSP2_N_CoV"/>
</dbReference>
<dbReference type="InterPro" id="IPR044389">
    <property type="entry name" value="NSP2_SARS-CoV-like"/>
</dbReference>
<dbReference type="InterPro" id="IPR024375">
    <property type="entry name" value="NSP3_bCoV"/>
</dbReference>
<dbReference type="InterPro" id="IPR047567">
    <property type="entry name" value="NSP3_G2M_bCoV"/>
</dbReference>
<dbReference type="InterPro" id="IPR024358">
    <property type="entry name" value="NSP3_N_bCoV"/>
</dbReference>
<dbReference type="InterPro" id="IPR032592">
    <property type="entry name" value="NSP3_NAB_bCoV"/>
</dbReference>
<dbReference type="InterPro" id="IPR042570">
    <property type="entry name" value="NSP3_NAB_bCoV_sf"/>
</dbReference>
<dbReference type="InterPro" id="IPR038166">
    <property type="entry name" value="NSP3_PL2pro_sf_bCoV"/>
</dbReference>
<dbReference type="InterPro" id="IPR038400">
    <property type="entry name" value="NSP3_SUD-M_sf_bCoV"/>
</dbReference>
<dbReference type="InterPro" id="IPR044864">
    <property type="entry name" value="NSP3_SUD-N_bCoV"/>
</dbReference>
<dbReference type="InterPro" id="IPR044374">
    <property type="entry name" value="NSP3_SUD-N_SARS-CoV"/>
</dbReference>
<dbReference type="InterPro" id="IPR043478">
    <property type="entry name" value="NSP3_SUD-N_sf_bCoV"/>
</dbReference>
<dbReference type="InterPro" id="IPR044357">
    <property type="entry name" value="NSP3_Ubl1_dom_CoV"/>
</dbReference>
<dbReference type="InterPro" id="IPR044353">
    <property type="entry name" value="Nsp3_Ubl2_dom_CoV"/>
</dbReference>
<dbReference type="InterPro" id="IPR038083">
    <property type="entry name" value="NSP3A-like"/>
</dbReference>
<dbReference type="InterPro" id="IPR038123">
    <property type="entry name" value="NSP4_C_sf_CoV"/>
</dbReference>
<dbReference type="InterPro" id="IPR044367">
    <property type="entry name" value="NSP6_betaCoV"/>
</dbReference>
<dbReference type="InterPro" id="IPR043610">
    <property type="entry name" value="NSP6_CoV"/>
</dbReference>
<dbReference type="InterPro" id="IPR014828">
    <property type="entry name" value="NSP7_CoV"/>
</dbReference>
<dbReference type="InterPro" id="IPR037204">
    <property type="entry name" value="NSP7_sf_CoV"/>
</dbReference>
<dbReference type="InterPro" id="IPR014829">
    <property type="entry name" value="NSP8_CoV"/>
</dbReference>
<dbReference type="InterPro" id="IPR037230">
    <property type="entry name" value="NSP8_sf_CoV"/>
</dbReference>
<dbReference type="InterPro" id="IPR014822">
    <property type="entry name" value="NSP9_CoV"/>
</dbReference>
<dbReference type="InterPro" id="IPR036499">
    <property type="entry name" value="NSP9_sf_CoV"/>
</dbReference>
<dbReference type="InterPro" id="IPR013016">
    <property type="entry name" value="Peptidase_C16_CoV"/>
</dbReference>
<dbReference type="InterPro" id="IPR008740">
    <property type="entry name" value="Peptidase_C30_CoV"/>
</dbReference>
<dbReference type="InterPro" id="IPR043477">
    <property type="entry name" value="Peptidase_C30_dom3_CoV"/>
</dbReference>
<dbReference type="InterPro" id="IPR009003">
    <property type="entry name" value="Peptidase_S1_PA"/>
</dbReference>
<dbReference type="InterPro" id="IPR043504">
    <property type="entry name" value="Peptidase_S1_PA_chymotrypsin"/>
</dbReference>
<dbReference type="InterPro" id="IPR043177">
    <property type="entry name" value="PLpro_N_sf_CoV"/>
</dbReference>
<dbReference type="InterPro" id="IPR043503">
    <property type="entry name" value="PLpro_palm_finger_dom_CoV"/>
</dbReference>
<dbReference type="InterPro" id="IPR043178">
    <property type="entry name" value="PLpro_thumb_sf_CoV"/>
</dbReference>
<dbReference type="InterPro" id="IPR018995">
    <property type="entry name" value="RNA_synth_NSP10_CoV"/>
</dbReference>
<dbReference type="Pfam" id="PF16251">
    <property type="entry name" value="bCoV_NAB"/>
    <property type="match status" value="1"/>
</dbReference>
<dbReference type="Pfam" id="PF11501">
    <property type="entry name" value="bCoV_NSP1"/>
    <property type="match status" value="1"/>
</dbReference>
<dbReference type="Pfam" id="PF12379">
    <property type="entry name" value="bCoV_NSP3_N"/>
    <property type="match status" value="1"/>
</dbReference>
<dbReference type="Pfam" id="PF12124">
    <property type="entry name" value="bCoV_SUD_C"/>
    <property type="match status" value="1"/>
</dbReference>
<dbReference type="Pfam" id="PF11633">
    <property type="entry name" value="bCoV_SUD_M"/>
    <property type="match status" value="1"/>
</dbReference>
<dbReference type="Pfam" id="PF09401">
    <property type="entry name" value="CoV_NSP10"/>
    <property type="match status" value="1"/>
</dbReference>
<dbReference type="Pfam" id="PF19212">
    <property type="entry name" value="CoV_NSP2_C"/>
    <property type="match status" value="1"/>
</dbReference>
<dbReference type="Pfam" id="PF19211">
    <property type="entry name" value="CoV_NSP2_N"/>
    <property type="match status" value="1"/>
</dbReference>
<dbReference type="Pfam" id="PF19218">
    <property type="entry name" value="CoV_NSP3_C"/>
    <property type="match status" value="1"/>
</dbReference>
<dbReference type="Pfam" id="PF16348">
    <property type="entry name" value="CoV_NSP4_C"/>
    <property type="match status" value="1"/>
</dbReference>
<dbReference type="Pfam" id="PF19217">
    <property type="entry name" value="CoV_NSP4_N"/>
    <property type="match status" value="1"/>
</dbReference>
<dbReference type="Pfam" id="PF19213">
    <property type="entry name" value="CoV_NSP6"/>
    <property type="match status" value="1"/>
</dbReference>
<dbReference type="Pfam" id="PF08716">
    <property type="entry name" value="CoV_NSP7"/>
    <property type="match status" value="1"/>
</dbReference>
<dbReference type="Pfam" id="PF08717">
    <property type="entry name" value="CoV_NSP8"/>
    <property type="match status" value="1"/>
</dbReference>
<dbReference type="Pfam" id="PF08710">
    <property type="entry name" value="CoV_NSP9"/>
    <property type="match status" value="1"/>
</dbReference>
<dbReference type="Pfam" id="PF08715">
    <property type="entry name" value="CoV_peptidase"/>
    <property type="match status" value="1"/>
</dbReference>
<dbReference type="Pfam" id="PF01661">
    <property type="entry name" value="Macro"/>
    <property type="match status" value="1"/>
</dbReference>
<dbReference type="Pfam" id="PF05409">
    <property type="entry name" value="Peptidase_C30"/>
    <property type="match status" value="1"/>
</dbReference>
<dbReference type="SMART" id="SM00506">
    <property type="entry name" value="A1pp"/>
    <property type="match status" value="1"/>
</dbReference>
<dbReference type="SUPFAM" id="SSF144246">
    <property type="entry name" value="Coronavirus NSP10-like"/>
    <property type="match status" value="1"/>
</dbReference>
<dbReference type="SUPFAM" id="SSF140367">
    <property type="entry name" value="Coronavirus NSP7-like"/>
    <property type="match status" value="1"/>
</dbReference>
<dbReference type="SUPFAM" id="SSF143076">
    <property type="entry name" value="Coronavirus NSP8-like"/>
    <property type="match status" value="1"/>
</dbReference>
<dbReference type="SUPFAM" id="SSF52949">
    <property type="entry name" value="Macro domain-like"/>
    <property type="match status" value="1"/>
</dbReference>
<dbReference type="SUPFAM" id="SSF159936">
    <property type="entry name" value="NSP3A-like"/>
    <property type="match status" value="1"/>
</dbReference>
<dbReference type="SUPFAM" id="SSF101816">
    <property type="entry name" value="Replicase NSP9"/>
    <property type="match status" value="1"/>
</dbReference>
<dbReference type="SUPFAM" id="SSF160099">
    <property type="entry name" value="SARS Nsp1-like"/>
    <property type="match status" value="1"/>
</dbReference>
<dbReference type="SUPFAM" id="SSF50494">
    <property type="entry name" value="Trypsin-like serine proteases"/>
    <property type="match status" value="1"/>
</dbReference>
<dbReference type="PROSITE" id="PS51963">
    <property type="entry name" value="BCOV_NSP1_C"/>
    <property type="match status" value="1"/>
</dbReference>
<dbReference type="PROSITE" id="PS51942">
    <property type="entry name" value="BCOV_NSP3C_C"/>
    <property type="match status" value="1"/>
</dbReference>
<dbReference type="PROSITE" id="PS51941">
    <property type="entry name" value="BCOV_NSP3C_M"/>
    <property type="match status" value="1"/>
</dbReference>
<dbReference type="PROSITE" id="PS51994">
    <property type="entry name" value="BCOV_NSP3E_G2M"/>
    <property type="match status" value="1"/>
</dbReference>
<dbReference type="PROSITE" id="PS51945">
    <property type="entry name" value="BCOV_NSP3E_NAB"/>
    <property type="match status" value="1"/>
</dbReference>
<dbReference type="PROSITE" id="PS51993">
    <property type="entry name" value="COV_3ECTO"/>
    <property type="match status" value="1"/>
</dbReference>
<dbReference type="PROSITE" id="PS51952">
    <property type="entry name" value="COV_EXON_MTASE_COACT"/>
    <property type="match status" value="1"/>
</dbReference>
<dbReference type="PROSITE" id="PS51962">
    <property type="entry name" value="COV_NSP1"/>
    <property type="match status" value="1"/>
</dbReference>
<dbReference type="PROSITE" id="PS51991">
    <property type="entry name" value="COV_NSP2_C"/>
    <property type="match status" value="1"/>
</dbReference>
<dbReference type="PROSITE" id="PS51990">
    <property type="entry name" value="COV_NSP2_M"/>
    <property type="match status" value="1"/>
</dbReference>
<dbReference type="PROSITE" id="PS51989">
    <property type="entry name" value="COV_NSP2_N"/>
    <property type="match status" value="1"/>
</dbReference>
<dbReference type="PROSITE" id="PS51992">
    <property type="entry name" value="COV_NSP3_Y"/>
    <property type="match status" value="1"/>
</dbReference>
<dbReference type="PROSITE" id="PS51943">
    <property type="entry name" value="COV_NSP3A_UBL"/>
    <property type="match status" value="1"/>
</dbReference>
<dbReference type="PROSITE" id="PS51944">
    <property type="entry name" value="COV_NSP3D_UBL"/>
    <property type="match status" value="1"/>
</dbReference>
<dbReference type="PROSITE" id="PS51946">
    <property type="entry name" value="COV_NSP4C"/>
    <property type="match status" value="1"/>
</dbReference>
<dbReference type="PROSITE" id="PS51949">
    <property type="entry name" value="COV_NSP7"/>
    <property type="match status" value="1"/>
</dbReference>
<dbReference type="PROSITE" id="PS51950">
    <property type="entry name" value="COV_NSP8"/>
    <property type="match status" value="1"/>
</dbReference>
<dbReference type="PROSITE" id="PS51951">
    <property type="entry name" value="COV_NSP9_SSRNA_BD"/>
    <property type="match status" value="1"/>
</dbReference>
<dbReference type="PROSITE" id="PS51442">
    <property type="entry name" value="M_PRO"/>
    <property type="match status" value="1"/>
</dbReference>
<dbReference type="PROSITE" id="PS51154">
    <property type="entry name" value="MACRO"/>
    <property type="match status" value="1"/>
</dbReference>
<dbReference type="PROSITE" id="PS51124">
    <property type="entry name" value="PEPTIDASE_C16"/>
    <property type="match status" value="1"/>
</dbReference>
<dbReference type="PROSITE" id="PS51940">
    <property type="entry name" value="SARS_NSP3C_N"/>
    <property type="match status" value="1"/>
</dbReference>
<reference key="1">
    <citation type="journal article" date="2005" name="Science">
        <title>Bats are natural reservoirs of SARS-like coronaviruses.</title>
        <authorList>
            <person name="Li W."/>
            <person name="Shi Z."/>
            <person name="Yu M."/>
            <person name="Ren W."/>
            <person name="Smith C."/>
            <person name="Epstein J.H."/>
            <person name="Wang H."/>
            <person name="Crameri G."/>
            <person name="Hu Z."/>
            <person name="Zhang H."/>
            <person name="Zhang J."/>
            <person name="McEachern J."/>
            <person name="Field H."/>
            <person name="Daszak P."/>
            <person name="Eaton B.T."/>
            <person name="Zhang S."/>
            <person name="Wang L.F."/>
        </authorList>
    </citation>
    <scope>NUCLEOTIDE SEQUENCE [GENOMIC RNA]</scope>
</reference>
<proteinExistence type="inferred from homology"/>
<keyword id="KW-1072">Activation of host autophagy by virus</keyword>
<keyword id="KW-1132">Decay of host mRNAs by virus</keyword>
<keyword id="KW-1015">Disulfide bond</keyword>
<keyword id="KW-0255">Endonuclease</keyword>
<keyword id="KW-1262">Eukaryotic host gene expression shutoff by virus</keyword>
<keyword id="KW-1193">Eukaryotic host translation shutoff by virus</keyword>
<keyword id="KW-1035">Host cytoplasm</keyword>
<keyword id="KW-1190">Host gene expression shutoff by virus</keyword>
<keyword id="KW-1043">Host membrane</keyword>
<keyword id="KW-1192">Host mRNA suppression by virus</keyword>
<keyword id="KW-0945">Host-virus interaction</keyword>
<keyword id="KW-0378">Hydrolase</keyword>
<keyword id="KW-1090">Inhibition of host innate immune response by virus</keyword>
<keyword id="KW-1114">Inhibition of host interferon signaling pathway by virus</keyword>
<keyword id="KW-1092">Inhibition of host IRF3 by virus</keyword>
<keyword id="KW-1095">Inhibition of host ISG15 by virus</keyword>
<keyword id="KW-1113">Inhibition of host RLR pathway by virus</keyword>
<keyword id="KW-0922">Interferon antiviral system evasion</keyword>
<keyword id="KW-0472">Membrane</keyword>
<keyword id="KW-0479">Metal-binding</keyword>
<keyword id="KW-0489">Methyltransferase</keyword>
<keyword id="KW-1127">Modulation of host ubiquitin pathway by viral deubiquitinase</keyword>
<keyword id="KW-1130">Modulation of host ubiquitin pathway by virus</keyword>
<keyword id="KW-0540">Nuclease</keyword>
<keyword id="KW-0645">Protease</keyword>
<keyword id="KW-0677">Repeat</keyword>
<keyword id="KW-0688">Ribosomal frameshifting</keyword>
<keyword id="KW-0694">RNA-binding</keyword>
<keyword id="KW-0788">Thiol protease</keyword>
<keyword id="KW-0808">Transferase</keyword>
<keyword id="KW-0812">Transmembrane</keyword>
<keyword id="KW-1133">Transmembrane helix</keyword>
<keyword id="KW-0833">Ubl conjugation pathway</keyword>
<keyword id="KW-0899">Viral immunoevasion</keyword>
<keyword id="KW-0862">Zinc</keyword>
<keyword id="KW-0863">Zinc-finger</keyword>
<accession>P0C6T7</accession>
<accession>Q3I5J6</accession>
<organism>
    <name type="scientific">Bat coronavirus Rp3/2004</name>
    <name type="common">BtCoV/Rp3/2004</name>
    <name type="synonym">SARS-like coronavirus Rp3</name>
    <dbReference type="NCBI Taxonomy" id="349344"/>
    <lineage>
        <taxon>Viruses</taxon>
        <taxon>Riboviria</taxon>
        <taxon>Orthornavirae</taxon>
        <taxon>Pisuviricota</taxon>
        <taxon>Pisoniviricetes</taxon>
        <taxon>Nidovirales</taxon>
        <taxon>Cornidovirineae</taxon>
        <taxon>Coronaviridae</taxon>
        <taxon>Orthocoronavirinae</taxon>
        <taxon>Betacoronavirus</taxon>
        <taxon>Sarbecovirus</taxon>
        <taxon>Severe acute respiratory syndrome coronavirus</taxon>
    </lineage>
</organism>